<evidence type="ECO:0000255" key="1">
    <source>
        <dbReference type="HAMAP-Rule" id="MF_00156"/>
    </source>
</evidence>
<dbReference type="EC" id="2.1.2.11" evidence="1"/>
<dbReference type="EMBL" id="CP000555">
    <property type="protein sequence ID" value="ABM93745.1"/>
    <property type="molecule type" value="Genomic_DNA"/>
</dbReference>
<dbReference type="RefSeq" id="WP_011828383.1">
    <property type="nucleotide sequence ID" value="NC_008825.1"/>
</dbReference>
<dbReference type="SMR" id="A2SDV6"/>
<dbReference type="STRING" id="420662.Mpe_A0783"/>
<dbReference type="KEGG" id="mpt:Mpe_A0783"/>
<dbReference type="eggNOG" id="COG0413">
    <property type="taxonomic scope" value="Bacteria"/>
</dbReference>
<dbReference type="HOGENOM" id="CLU_036645_1_0_4"/>
<dbReference type="UniPathway" id="UPA00028">
    <property type="reaction ID" value="UER00003"/>
</dbReference>
<dbReference type="Proteomes" id="UP000000366">
    <property type="component" value="Chromosome"/>
</dbReference>
<dbReference type="GO" id="GO:0005737">
    <property type="term" value="C:cytoplasm"/>
    <property type="evidence" value="ECO:0007669"/>
    <property type="project" value="UniProtKB-SubCell"/>
</dbReference>
<dbReference type="GO" id="GO:0003864">
    <property type="term" value="F:3-methyl-2-oxobutanoate hydroxymethyltransferase activity"/>
    <property type="evidence" value="ECO:0007669"/>
    <property type="project" value="UniProtKB-UniRule"/>
</dbReference>
<dbReference type="GO" id="GO:0000287">
    <property type="term" value="F:magnesium ion binding"/>
    <property type="evidence" value="ECO:0007669"/>
    <property type="project" value="TreeGrafter"/>
</dbReference>
<dbReference type="GO" id="GO:0015940">
    <property type="term" value="P:pantothenate biosynthetic process"/>
    <property type="evidence" value="ECO:0007669"/>
    <property type="project" value="UniProtKB-UniRule"/>
</dbReference>
<dbReference type="CDD" id="cd06557">
    <property type="entry name" value="KPHMT-like"/>
    <property type="match status" value="1"/>
</dbReference>
<dbReference type="FunFam" id="3.20.20.60:FF:000003">
    <property type="entry name" value="3-methyl-2-oxobutanoate hydroxymethyltransferase"/>
    <property type="match status" value="1"/>
</dbReference>
<dbReference type="Gene3D" id="3.20.20.60">
    <property type="entry name" value="Phosphoenolpyruvate-binding domains"/>
    <property type="match status" value="1"/>
</dbReference>
<dbReference type="HAMAP" id="MF_00156">
    <property type="entry name" value="PanB"/>
    <property type="match status" value="1"/>
</dbReference>
<dbReference type="InterPro" id="IPR003700">
    <property type="entry name" value="Pantoate_hydroxy_MeTrfase"/>
</dbReference>
<dbReference type="InterPro" id="IPR015813">
    <property type="entry name" value="Pyrv/PenolPyrv_kinase-like_dom"/>
</dbReference>
<dbReference type="InterPro" id="IPR040442">
    <property type="entry name" value="Pyrv_kinase-like_dom_sf"/>
</dbReference>
<dbReference type="NCBIfam" id="TIGR00222">
    <property type="entry name" value="panB"/>
    <property type="match status" value="1"/>
</dbReference>
<dbReference type="NCBIfam" id="NF001452">
    <property type="entry name" value="PRK00311.1"/>
    <property type="match status" value="1"/>
</dbReference>
<dbReference type="PANTHER" id="PTHR20881">
    <property type="entry name" value="3-METHYL-2-OXOBUTANOATE HYDROXYMETHYLTRANSFERASE"/>
    <property type="match status" value="1"/>
</dbReference>
<dbReference type="PANTHER" id="PTHR20881:SF0">
    <property type="entry name" value="3-METHYL-2-OXOBUTANOATE HYDROXYMETHYLTRANSFERASE"/>
    <property type="match status" value="1"/>
</dbReference>
<dbReference type="Pfam" id="PF02548">
    <property type="entry name" value="Pantoate_transf"/>
    <property type="match status" value="1"/>
</dbReference>
<dbReference type="PIRSF" id="PIRSF000388">
    <property type="entry name" value="Pantoate_hydroxy_MeTrfase"/>
    <property type="match status" value="1"/>
</dbReference>
<dbReference type="SUPFAM" id="SSF51621">
    <property type="entry name" value="Phosphoenolpyruvate/pyruvate domain"/>
    <property type="match status" value="1"/>
</dbReference>
<name>PANB1_METPP</name>
<feature type="chain" id="PRO_0000297295" description="3-methyl-2-oxobutanoate hydroxymethyltransferase 1">
    <location>
        <begin position="1"/>
        <end position="294"/>
    </location>
</feature>
<feature type="active site" description="Proton acceptor" evidence="1">
    <location>
        <position position="192"/>
    </location>
</feature>
<feature type="binding site" evidence="1">
    <location>
        <begin position="55"/>
        <end position="56"/>
    </location>
    <ligand>
        <name>3-methyl-2-oxobutanoate</name>
        <dbReference type="ChEBI" id="CHEBI:11851"/>
    </ligand>
</feature>
<feature type="binding site" evidence="1">
    <location>
        <position position="55"/>
    </location>
    <ligand>
        <name>Mg(2+)</name>
        <dbReference type="ChEBI" id="CHEBI:18420"/>
    </ligand>
</feature>
<feature type="binding site" evidence="1">
    <location>
        <position position="123"/>
    </location>
    <ligand>
        <name>3-methyl-2-oxobutanoate</name>
        <dbReference type="ChEBI" id="CHEBI:11851"/>
    </ligand>
</feature>
<protein>
    <recommendedName>
        <fullName evidence="1">3-methyl-2-oxobutanoate hydroxymethyltransferase 1</fullName>
        <ecNumber evidence="1">2.1.2.11</ecNumber>
    </recommendedName>
    <alternativeName>
        <fullName evidence="1">Ketopantoate hydroxymethyltransferase 1</fullName>
        <shortName evidence="1">KPHMT 1</shortName>
    </alternativeName>
</protein>
<keyword id="KW-0963">Cytoplasm</keyword>
<keyword id="KW-0460">Magnesium</keyword>
<keyword id="KW-0479">Metal-binding</keyword>
<keyword id="KW-0566">Pantothenate biosynthesis</keyword>
<keyword id="KW-1185">Reference proteome</keyword>
<keyword id="KW-0808">Transferase</keyword>
<organism>
    <name type="scientific">Methylibium petroleiphilum (strain ATCC BAA-1232 / LMG 22953 / PM1)</name>
    <dbReference type="NCBI Taxonomy" id="420662"/>
    <lineage>
        <taxon>Bacteria</taxon>
        <taxon>Pseudomonadati</taxon>
        <taxon>Pseudomonadota</taxon>
        <taxon>Betaproteobacteria</taxon>
        <taxon>Burkholderiales</taxon>
        <taxon>Sphaerotilaceae</taxon>
        <taxon>Methylibium</taxon>
    </lineage>
</organism>
<proteinExistence type="inferred from homology"/>
<reference key="1">
    <citation type="journal article" date="2007" name="J. Bacteriol.">
        <title>Whole-genome analysis of the methyl tert-butyl ether-degrading beta-proteobacterium Methylibium petroleiphilum PM1.</title>
        <authorList>
            <person name="Kane S.R."/>
            <person name="Chakicherla A.Y."/>
            <person name="Chain P.S.G."/>
            <person name="Schmidt R."/>
            <person name="Shin M.W."/>
            <person name="Legler T.C."/>
            <person name="Scow K.M."/>
            <person name="Larimer F.W."/>
            <person name="Lucas S.M."/>
            <person name="Richardson P.M."/>
            <person name="Hristova K.R."/>
        </authorList>
    </citation>
    <scope>NUCLEOTIDE SEQUENCE [LARGE SCALE GENOMIC DNA]</scope>
    <source>
        <strain>ATCC BAA-1232 / LMG 22953 / PM1</strain>
    </source>
</reference>
<sequence>MSDAAAAPPERKKRTITEIRDSKKSGEKMVYTSVPDYTSAKWAELAGVDVAVVGDSLAMVAHGHSSTVPATMDMMVMHAQAVRRGAPRTFTLGCMPYQSYNTVDRALLNATRFMQDGGCDAVKPQGGRSQAHILKALVDSGIPTASHIGLTPHTIAMFGGFKIQGRTAEAAMKILEDAFAIQDAGCFMLEFEAVPAKIATLISKQLEIPTIGIGAGAGCDGQILLSYDLLGVFTDFKPKFTKRYANLTEVAVQGLKAYVDEVKTGRFPDDDHSYGVDDREYEQFMNLVEKRRHV</sequence>
<accession>A2SDV6</accession>
<comment type="function">
    <text evidence="1">Catalyzes the reversible reaction in which hydroxymethyl group from 5,10-methylenetetrahydrofolate is transferred onto alpha-ketoisovalerate to form ketopantoate.</text>
</comment>
<comment type="catalytic activity">
    <reaction evidence="1">
        <text>3-methyl-2-oxobutanoate + (6R)-5,10-methylene-5,6,7,8-tetrahydrofolate + H2O = 2-dehydropantoate + (6S)-5,6,7,8-tetrahydrofolate</text>
        <dbReference type="Rhea" id="RHEA:11824"/>
        <dbReference type="ChEBI" id="CHEBI:11561"/>
        <dbReference type="ChEBI" id="CHEBI:11851"/>
        <dbReference type="ChEBI" id="CHEBI:15377"/>
        <dbReference type="ChEBI" id="CHEBI:15636"/>
        <dbReference type="ChEBI" id="CHEBI:57453"/>
        <dbReference type="EC" id="2.1.2.11"/>
    </reaction>
</comment>
<comment type="cofactor">
    <cofactor evidence="1">
        <name>Mg(2+)</name>
        <dbReference type="ChEBI" id="CHEBI:18420"/>
    </cofactor>
    <text evidence="1">Binds 1 Mg(2+) ion per subunit.</text>
</comment>
<comment type="pathway">
    <text evidence="1">Cofactor biosynthesis; (R)-pantothenate biosynthesis; (R)-pantoate from 3-methyl-2-oxobutanoate: step 1/2.</text>
</comment>
<comment type="subunit">
    <text evidence="1">Homodecamer; pentamer of dimers.</text>
</comment>
<comment type="subcellular location">
    <subcellularLocation>
        <location evidence="1">Cytoplasm</location>
    </subcellularLocation>
</comment>
<comment type="similarity">
    <text evidence="1">Belongs to the PanB family.</text>
</comment>
<gene>
    <name evidence="1" type="primary">panB1</name>
    <name type="ordered locus">Mpe_A0783</name>
</gene>